<name>LPXK_SHEB9</name>
<reference key="1">
    <citation type="submission" date="2007-11" db="EMBL/GenBank/DDBJ databases">
        <title>Complete sequence of chromosome of Shewanella baltica OS195.</title>
        <authorList>
            <consortium name="US DOE Joint Genome Institute"/>
            <person name="Copeland A."/>
            <person name="Lucas S."/>
            <person name="Lapidus A."/>
            <person name="Barry K."/>
            <person name="Glavina del Rio T."/>
            <person name="Dalin E."/>
            <person name="Tice H."/>
            <person name="Pitluck S."/>
            <person name="Chain P."/>
            <person name="Malfatti S."/>
            <person name="Shin M."/>
            <person name="Vergez L."/>
            <person name="Schmutz J."/>
            <person name="Larimer F."/>
            <person name="Land M."/>
            <person name="Hauser L."/>
            <person name="Kyrpides N."/>
            <person name="Kim E."/>
            <person name="Brettar I."/>
            <person name="Rodrigues J."/>
            <person name="Konstantinidis K."/>
            <person name="Klappenbach J."/>
            <person name="Hofle M."/>
            <person name="Tiedje J."/>
            <person name="Richardson P."/>
        </authorList>
    </citation>
    <scope>NUCLEOTIDE SEQUENCE [LARGE SCALE GENOMIC DNA]</scope>
    <source>
        <strain>OS195</strain>
    </source>
</reference>
<comment type="function">
    <text evidence="1">Transfers the gamma-phosphate of ATP to the 4'-position of a tetraacyldisaccharide 1-phosphate intermediate (termed DS-1-P) to form tetraacyldisaccharide 1,4'-bis-phosphate (lipid IVA).</text>
</comment>
<comment type="catalytic activity">
    <reaction evidence="1">
        <text>a lipid A disaccharide + ATP = a lipid IVA + ADP + H(+)</text>
        <dbReference type="Rhea" id="RHEA:67840"/>
        <dbReference type="ChEBI" id="CHEBI:15378"/>
        <dbReference type="ChEBI" id="CHEBI:30616"/>
        <dbReference type="ChEBI" id="CHEBI:176343"/>
        <dbReference type="ChEBI" id="CHEBI:176425"/>
        <dbReference type="ChEBI" id="CHEBI:456216"/>
        <dbReference type="EC" id="2.7.1.130"/>
    </reaction>
</comment>
<comment type="pathway">
    <text evidence="1">Glycolipid biosynthesis; lipid IV(A) biosynthesis; lipid IV(A) from (3R)-3-hydroxytetradecanoyl-[acyl-carrier-protein] and UDP-N-acetyl-alpha-D-glucosamine: step 6/6.</text>
</comment>
<comment type="similarity">
    <text evidence="1">Belongs to the LpxK family.</text>
</comment>
<dbReference type="EC" id="2.7.1.130" evidence="1"/>
<dbReference type="EMBL" id="CP000891">
    <property type="protein sequence ID" value="ABX48879.1"/>
    <property type="molecule type" value="Genomic_DNA"/>
</dbReference>
<dbReference type="RefSeq" id="WP_012196872.1">
    <property type="nucleotide sequence ID" value="NC_009997.1"/>
</dbReference>
<dbReference type="SMR" id="A9KXE0"/>
<dbReference type="GeneID" id="11771931"/>
<dbReference type="KEGG" id="sbn:Sbal195_1706"/>
<dbReference type="HOGENOM" id="CLU_038816_2_0_6"/>
<dbReference type="UniPathway" id="UPA00359">
    <property type="reaction ID" value="UER00482"/>
</dbReference>
<dbReference type="Proteomes" id="UP000000770">
    <property type="component" value="Chromosome"/>
</dbReference>
<dbReference type="GO" id="GO:0005886">
    <property type="term" value="C:plasma membrane"/>
    <property type="evidence" value="ECO:0007669"/>
    <property type="project" value="TreeGrafter"/>
</dbReference>
<dbReference type="GO" id="GO:0005524">
    <property type="term" value="F:ATP binding"/>
    <property type="evidence" value="ECO:0007669"/>
    <property type="project" value="UniProtKB-UniRule"/>
</dbReference>
<dbReference type="GO" id="GO:0009029">
    <property type="term" value="F:tetraacyldisaccharide 4'-kinase activity"/>
    <property type="evidence" value="ECO:0007669"/>
    <property type="project" value="UniProtKB-UniRule"/>
</dbReference>
<dbReference type="GO" id="GO:0009245">
    <property type="term" value="P:lipid A biosynthetic process"/>
    <property type="evidence" value="ECO:0007669"/>
    <property type="project" value="UniProtKB-UniRule"/>
</dbReference>
<dbReference type="GO" id="GO:0009244">
    <property type="term" value="P:lipopolysaccharide core region biosynthetic process"/>
    <property type="evidence" value="ECO:0007669"/>
    <property type="project" value="TreeGrafter"/>
</dbReference>
<dbReference type="HAMAP" id="MF_00409">
    <property type="entry name" value="LpxK"/>
    <property type="match status" value="1"/>
</dbReference>
<dbReference type="InterPro" id="IPR003758">
    <property type="entry name" value="LpxK"/>
</dbReference>
<dbReference type="InterPro" id="IPR027417">
    <property type="entry name" value="P-loop_NTPase"/>
</dbReference>
<dbReference type="NCBIfam" id="TIGR00682">
    <property type="entry name" value="lpxK"/>
    <property type="match status" value="1"/>
</dbReference>
<dbReference type="PANTHER" id="PTHR42724">
    <property type="entry name" value="TETRAACYLDISACCHARIDE 4'-KINASE"/>
    <property type="match status" value="1"/>
</dbReference>
<dbReference type="PANTHER" id="PTHR42724:SF1">
    <property type="entry name" value="TETRAACYLDISACCHARIDE 4'-KINASE, MITOCHONDRIAL-RELATED"/>
    <property type="match status" value="1"/>
</dbReference>
<dbReference type="Pfam" id="PF02606">
    <property type="entry name" value="LpxK"/>
    <property type="match status" value="1"/>
</dbReference>
<dbReference type="SUPFAM" id="SSF52540">
    <property type="entry name" value="P-loop containing nucleoside triphosphate hydrolases"/>
    <property type="match status" value="1"/>
</dbReference>
<gene>
    <name evidence="1" type="primary">lpxK</name>
    <name type="ordered locus">Sbal195_1706</name>
</gene>
<sequence>MQALVNKIWYQGHPLRWLLLPLSWLFAVITYVRRALFRLGIKSQTAMPVPVIVVGNITVGGSGKTPTVIYLIELLRQHGFTPGVISRGYGVDIQGVRTVNLGASAVEVGDEPAMIVARTQVPMVVGAKRVDAANALIAEFGVDVIICDDGLQHYALGRDIELVVIDGQRGLGNGLLLPAGPLREGAWRLDAVDFIVNNGGPAAKGQFEMQLAPTEVKPVKCDLTSGEYSFDKSQPLVAMAGIGNPARFFESLRAQGYQLALCQGFDDHQPYDKTQLRDLAQDLPLLMTEKDAVKCRDFAQENWWYLAVNAKLSPQFDEQLLARLREVAAAKQGNFHGIR</sequence>
<organism>
    <name type="scientific">Shewanella baltica (strain OS195)</name>
    <dbReference type="NCBI Taxonomy" id="399599"/>
    <lineage>
        <taxon>Bacteria</taxon>
        <taxon>Pseudomonadati</taxon>
        <taxon>Pseudomonadota</taxon>
        <taxon>Gammaproteobacteria</taxon>
        <taxon>Alteromonadales</taxon>
        <taxon>Shewanellaceae</taxon>
        <taxon>Shewanella</taxon>
    </lineage>
</organism>
<evidence type="ECO:0000255" key="1">
    <source>
        <dbReference type="HAMAP-Rule" id="MF_00409"/>
    </source>
</evidence>
<protein>
    <recommendedName>
        <fullName evidence="1">Tetraacyldisaccharide 4'-kinase</fullName>
        <ecNumber evidence="1">2.7.1.130</ecNumber>
    </recommendedName>
    <alternativeName>
        <fullName evidence="1">Lipid A 4'-kinase</fullName>
    </alternativeName>
</protein>
<feature type="chain" id="PRO_0000340859" description="Tetraacyldisaccharide 4'-kinase">
    <location>
        <begin position="1"/>
        <end position="339"/>
    </location>
</feature>
<feature type="binding site" evidence="1">
    <location>
        <begin position="58"/>
        <end position="65"/>
    </location>
    <ligand>
        <name>ATP</name>
        <dbReference type="ChEBI" id="CHEBI:30616"/>
    </ligand>
</feature>
<proteinExistence type="inferred from homology"/>
<keyword id="KW-0067">ATP-binding</keyword>
<keyword id="KW-0418">Kinase</keyword>
<keyword id="KW-0441">Lipid A biosynthesis</keyword>
<keyword id="KW-0444">Lipid biosynthesis</keyword>
<keyword id="KW-0443">Lipid metabolism</keyword>
<keyword id="KW-0547">Nucleotide-binding</keyword>
<keyword id="KW-0808">Transferase</keyword>
<accession>A9KXE0</accession>